<accession>Q38667</accession>
<accession>Q7PCE1</accession>
<protein>
    <recommendedName>
        <fullName>Protein ninG</fullName>
    </recommendedName>
</protein>
<gene>
    <name type="primary">ninG</name>
</gene>
<name>NING_BPP22</name>
<evidence type="ECO:0000256" key="1">
    <source>
        <dbReference type="SAM" id="MobiDB-lite"/>
    </source>
</evidence>
<evidence type="ECO:0000305" key="2"/>
<organism>
    <name type="scientific">Salmonella phage P22</name>
    <name type="common">Bacteriophage P22</name>
    <dbReference type="NCBI Taxonomy" id="10754"/>
    <lineage>
        <taxon>Viruses</taxon>
        <taxon>Duplodnaviria</taxon>
        <taxon>Heunggongvirae</taxon>
        <taxon>Uroviricota</taxon>
        <taxon>Caudoviricetes</taxon>
        <taxon>Lederbergvirus</taxon>
    </lineage>
</organism>
<dbReference type="EMBL" id="X78401">
    <property type="protein sequence ID" value="CAA55163.1"/>
    <property type="molecule type" value="Genomic_DNA"/>
</dbReference>
<dbReference type="EMBL" id="AF217253">
    <property type="protein sequence ID" value="AAF75035.1"/>
    <property type="molecule type" value="Genomic_DNA"/>
</dbReference>
<dbReference type="EMBL" id="BK000583">
    <property type="protein sequence ID" value="DAA01033.1"/>
    <property type="molecule type" value="Genomic_DNA"/>
</dbReference>
<dbReference type="RefSeq" id="YP_063728.1">
    <property type="nucleotide sequence ID" value="NC_002371.2"/>
</dbReference>
<dbReference type="GeneID" id="2944233"/>
<dbReference type="KEGG" id="vg:2944233"/>
<dbReference type="OrthoDB" id="10888at10239"/>
<dbReference type="Proteomes" id="UP000001795">
    <property type="component" value="Segment"/>
</dbReference>
<dbReference type="Proteomes" id="UP000007960">
    <property type="component" value="Segment"/>
</dbReference>
<dbReference type="InterPro" id="IPR008713">
    <property type="entry name" value="Phage_lambda_NinG"/>
</dbReference>
<dbReference type="Pfam" id="PF05766">
    <property type="entry name" value="NinG"/>
    <property type="match status" value="1"/>
</dbReference>
<keyword id="KW-1185">Reference proteome</keyword>
<proteinExistence type="inferred from homology"/>
<reference key="1">
    <citation type="submission" date="1994-05" db="EMBL/GenBank/DDBJ databases">
        <title>Nucleotide sequence of PR-operon of P22 is a mosaic of other lambdoid chromosomes and reveals functional implications for the late gene expression.</title>
        <authorList>
            <person name="Kroeger M."/>
            <person name="Hobom G."/>
        </authorList>
    </citation>
    <scope>NUCLEOTIDE SEQUENCE [GENOMIC DNA]</scope>
</reference>
<reference key="2">
    <citation type="journal article" date="2000" name="J. Bacteriol.">
        <title>Sequence of the genome of Salmonella bacteriophage P22.</title>
        <authorList>
            <person name="Vander Byl C.S."/>
            <person name="Kropinski A.M.B."/>
        </authorList>
    </citation>
    <scope>NUCLEOTIDE SEQUENCE [LARGE SCALE GENOMIC DNA]</scope>
</reference>
<reference key="3">
    <citation type="journal article" date="2003" name="J. Bacteriol.">
        <title>Corrected sequence of the bacteriophage P22 genome.</title>
        <authorList>
            <person name="Pedulla M.L."/>
            <person name="Ford M.E."/>
            <person name="Karthikeyan T."/>
            <person name="Houtz J.M."/>
            <person name="Hendrix R.W."/>
            <person name="Hatfull G.F."/>
            <person name="Poteete A.R."/>
            <person name="Gilcrease E.B."/>
            <person name="Winn-Stapley D.A."/>
            <person name="Casjens S.R."/>
        </authorList>
    </citation>
    <scope>NUCLEOTIDE SEQUENCE [LARGE SCALE GENOMIC DNA]</scope>
</reference>
<organismHost>
    <name type="scientific">Salmonella typhimurium</name>
    <dbReference type="NCBI Taxonomy" id="90371"/>
</organismHost>
<sequence>MAKSARRRCKNEECREWFHPAFANQWWCSPECGTKIALERRSKEREKAEKAAEKKRRREEQKQKDKLKIRKLALKPRSYWIKQAQQAVNAFIRERDRDLPCISCGTLTSAQWDAGHYRTTAAAPQLRFDERNIHKQCVVCNQHKSGNLVPYRVMLIERIGIAAVDEIESDHKRHRWTTEECKAIKAEYQQKLKDLRDSRSEAA</sequence>
<comment type="similarity">
    <text evidence="2">Belongs to the ninG family.</text>
</comment>
<feature type="chain" id="PRO_0000077628" description="Protein ninG">
    <location>
        <begin position="1"/>
        <end position="203"/>
    </location>
</feature>
<feature type="region of interest" description="Disordered" evidence="1">
    <location>
        <begin position="39"/>
        <end position="65"/>
    </location>
</feature>
<feature type="sequence conflict" description="In Ref. 1 and 2." evidence="2" ref="1 2">
    <original>K</original>
    <variation>E</variation>
    <location>
        <position position="68"/>
    </location>
</feature>